<proteinExistence type="evidence at protein level"/>
<keyword id="KW-0002">3D-structure</keyword>
<keyword id="KW-0025">Alternative splicing</keyword>
<keyword id="KW-0963">Cytoplasm</keyword>
<keyword id="KW-0378">Hydrolase</keyword>
<keyword id="KW-0539">Nucleus</keyword>
<keyword id="KW-0597">Phosphoprotein</keyword>
<keyword id="KW-0904">Protein phosphatase</keyword>
<keyword id="KW-1267">Proteomics identification</keyword>
<keyword id="KW-1185">Reference proteome</keyword>
<reference key="1">
    <citation type="journal article" date="1996" name="Oncogene">
        <title>Characterization of the PEST family protein tyrosine phosphatase BDP1.</title>
        <authorList>
            <person name="Kim Y.W."/>
            <person name="Wang H.-Y."/>
            <person name="Sures I."/>
            <person name="Lammers R."/>
            <person name="Martell K.J."/>
            <person name="Ullrich A."/>
        </authorList>
    </citation>
    <scope>NUCLEOTIDE SEQUENCE [MRNA] (ISOFORM 1)</scope>
    <scope>TISSUE SPECIFICITY</scope>
    <scope>CHARACTERIZATION</scope>
    <source>
        <tissue>Brain</tissue>
    </source>
</reference>
<reference key="2">
    <citation type="journal article" date="2004" name="Nat. Genet.">
        <title>Complete sequencing and characterization of 21,243 full-length human cDNAs.</title>
        <authorList>
            <person name="Ota T."/>
            <person name="Suzuki Y."/>
            <person name="Nishikawa T."/>
            <person name="Otsuki T."/>
            <person name="Sugiyama T."/>
            <person name="Irie R."/>
            <person name="Wakamatsu A."/>
            <person name="Hayashi K."/>
            <person name="Sato H."/>
            <person name="Nagai K."/>
            <person name="Kimura K."/>
            <person name="Makita H."/>
            <person name="Sekine M."/>
            <person name="Obayashi M."/>
            <person name="Nishi T."/>
            <person name="Shibahara T."/>
            <person name="Tanaka T."/>
            <person name="Ishii S."/>
            <person name="Yamamoto J."/>
            <person name="Saito K."/>
            <person name="Kawai Y."/>
            <person name="Isono Y."/>
            <person name="Nakamura Y."/>
            <person name="Nagahari K."/>
            <person name="Murakami K."/>
            <person name="Yasuda T."/>
            <person name="Iwayanagi T."/>
            <person name="Wagatsuma M."/>
            <person name="Shiratori A."/>
            <person name="Sudo H."/>
            <person name="Hosoiri T."/>
            <person name="Kaku Y."/>
            <person name="Kodaira H."/>
            <person name="Kondo H."/>
            <person name="Sugawara M."/>
            <person name="Takahashi M."/>
            <person name="Kanda K."/>
            <person name="Yokoi T."/>
            <person name="Furuya T."/>
            <person name="Kikkawa E."/>
            <person name="Omura Y."/>
            <person name="Abe K."/>
            <person name="Kamihara K."/>
            <person name="Katsuta N."/>
            <person name="Sato K."/>
            <person name="Tanikawa M."/>
            <person name="Yamazaki M."/>
            <person name="Ninomiya K."/>
            <person name="Ishibashi T."/>
            <person name="Yamashita H."/>
            <person name="Murakawa K."/>
            <person name="Fujimori K."/>
            <person name="Tanai H."/>
            <person name="Kimata M."/>
            <person name="Watanabe M."/>
            <person name="Hiraoka S."/>
            <person name="Chiba Y."/>
            <person name="Ishida S."/>
            <person name="Ono Y."/>
            <person name="Takiguchi S."/>
            <person name="Watanabe S."/>
            <person name="Yosida M."/>
            <person name="Hotuta T."/>
            <person name="Kusano J."/>
            <person name="Kanehori K."/>
            <person name="Takahashi-Fujii A."/>
            <person name="Hara H."/>
            <person name="Tanase T.-O."/>
            <person name="Nomura Y."/>
            <person name="Togiya S."/>
            <person name="Komai F."/>
            <person name="Hara R."/>
            <person name="Takeuchi K."/>
            <person name="Arita M."/>
            <person name="Imose N."/>
            <person name="Musashino K."/>
            <person name="Yuuki H."/>
            <person name="Oshima A."/>
            <person name="Sasaki N."/>
            <person name="Aotsuka S."/>
            <person name="Yoshikawa Y."/>
            <person name="Matsunawa H."/>
            <person name="Ichihara T."/>
            <person name="Shiohata N."/>
            <person name="Sano S."/>
            <person name="Moriya S."/>
            <person name="Momiyama H."/>
            <person name="Satoh N."/>
            <person name="Takami S."/>
            <person name="Terashima Y."/>
            <person name="Suzuki O."/>
            <person name="Nakagawa S."/>
            <person name="Senoh A."/>
            <person name="Mizoguchi H."/>
            <person name="Goto Y."/>
            <person name="Shimizu F."/>
            <person name="Wakebe H."/>
            <person name="Hishigaki H."/>
            <person name="Watanabe T."/>
            <person name="Sugiyama A."/>
            <person name="Takemoto M."/>
            <person name="Kawakami B."/>
            <person name="Yamazaki M."/>
            <person name="Watanabe K."/>
            <person name="Kumagai A."/>
            <person name="Itakura S."/>
            <person name="Fukuzumi Y."/>
            <person name="Fujimori Y."/>
            <person name="Komiyama M."/>
            <person name="Tashiro H."/>
            <person name="Tanigami A."/>
            <person name="Fujiwara T."/>
            <person name="Ono T."/>
            <person name="Yamada K."/>
            <person name="Fujii Y."/>
            <person name="Ozaki K."/>
            <person name="Hirao M."/>
            <person name="Ohmori Y."/>
            <person name="Kawabata A."/>
            <person name="Hikiji T."/>
            <person name="Kobatake N."/>
            <person name="Inagaki H."/>
            <person name="Ikema Y."/>
            <person name="Okamoto S."/>
            <person name="Okitani R."/>
            <person name="Kawakami T."/>
            <person name="Noguchi S."/>
            <person name="Itoh T."/>
            <person name="Shigeta K."/>
            <person name="Senba T."/>
            <person name="Matsumura K."/>
            <person name="Nakajima Y."/>
            <person name="Mizuno T."/>
            <person name="Morinaga M."/>
            <person name="Sasaki M."/>
            <person name="Togashi T."/>
            <person name="Oyama M."/>
            <person name="Hata H."/>
            <person name="Watanabe M."/>
            <person name="Komatsu T."/>
            <person name="Mizushima-Sugano J."/>
            <person name="Satoh T."/>
            <person name="Shirai Y."/>
            <person name="Takahashi Y."/>
            <person name="Nakagawa K."/>
            <person name="Okumura K."/>
            <person name="Nagase T."/>
            <person name="Nomura N."/>
            <person name="Kikuchi H."/>
            <person name="Masuho Y."/>
            <person name="Yamashita R."/>
            <person name="Nakai K."/>
            <person name="Yada T."/>
            <person name="Nakamura Y."/>
            <person name="Ohara O."/>
            <person name="Isogai T."/>
            <person name="Sugano S."/>
        </authorList>
    </citation>
    <scope>NUCLEOTIDE SEQUENCE [LARGE SCALE MRNA] (ISOFORM 2)</scope>
    <source>
        <tissue>Liver</tissue>
    </source>
</reference>
<reference key="3">
    <citation type="journal article" date="2005" name="Nature">
        <title>Generation and annotation of the DNA sequences of human chromosomes 2 and 4.</title>
        <authorList>
            <person name="Hillier L.W."/>
            <person name="Graves T.A."/>
            <person name="Fulton R.S."/>
            <person name="Fulton L.A."/>
            <person name="Pepin K.H."/>
            <person name="Minx P."/>
            <person name="Wagner-McPherson C."/>
            <person name="Layman D."/>
            <person name="Wylie K."/>
            <person name="Sekhon M."/>
            <person name="Becker M.C."/>
            <person name="Fewell G.A."/>
            <person name="Delehaunty K.D."/>
            <person name="Miner T.L."/>
            <person name="Nash W.E."/>
            <person name="Kremitzki C."/>
            <person name="Oddy L."/>
            <person name="Du H."/>
            <person name="Sun H."/>
            <person name="Bradshaw-Cordum H."/>
            <person name="Ali J."/>
            <person name="Carter J."/>
            <person name="Cordes M."/>
            <person name="Harris A."/>
            <person name="Isak A."/>
            <person name="van Brunt A."/>
            <person name="Nguyen C."/>
            <person name="Du F."/>
            <person name="Courtney L."/>
            <person name="Kalicki J."/>
            <person name="Ozersky P."/>
            <person name="Abbott S."/>
            <person name="Armstrong J."/>
            <person name="Belter E.A."/>
            <person name="Caruso L."/>
            <person name="Cedroni M."/>
            <person name="Cotton M."/>
            <person name="Davidson T."/>
            <person name="Desai A."/>
            <person name="Elliott G."/>
            <person name="Erb T."/>
            <person name="Fronick C."/>
            <person name="Gaige T."/>
            <person name="Haakenson W."/>
            <person name="Haglund K."/>
            <person name="Holmes A."/>
            <person name="Harkins R."/>
            <person name="Kim K."/>
            <person name="Kruchowski S.S."/>
            <person name="Strong C.M."/>
            <person name="Grewal N."/>
            <person name="Goyea E."/>
            <person name="Hou S."/>
            <person name="Levy A."/>
            <person name="Martinka S."/>
            <person name="Mead K."/>
            <person name="McLellan M.D."/>
            <person name="Meyer R."/>
            <person name="Randall-Maher J."/>
            <person name="Tomlinson C."/>
            <person name="Dauphin-Kohlberg S."/>
            <person name="Kozlowicz-Reilly A."/>
            <person name="Shah N."/>
            <person name="Swearengen-Shahid S."/>
            <person name="Snider J."/>
            <person name="Strong J.T."/>
            <person name="Thompson J."/>
            <person name="Yoakum M."/>
            <person name="Leonard S."/>
            <person name="Pearman C."/>
            <person name="Trani L."/>
            <person name="Radionenko M."/>
            <person name="Waligorski J.E."/>
            <person name="Wang C."/>
            <person name="Rock S.M."/>
            <person name="Tin-Wollam A.-M."/>
            <person name="Maupin R."/>
            <person name="Latreille P."/>
            <person name="Wendl M.C."/>
            <person name="Yang S.-P."/>
            <person name="Pohl C."/>
            <person name="Wallis J.W."/>
            <person name="Spieth J."/>
            <person name="Bieri T.A."/>
            <person name="Berkowicz N."/>
            <person name="Nelson J.O."/>
            <person name="Osborne J."/>
            <person name="Ding L."/>
            <person name="Meyer R."/>
            <person name="Sabo A."/>
            <person name="Shotland Y."/>
            <person name="Sinha P."/>
            <person name="Wohldmann P.E."/>
            <person name="Cook L.L."/>
            <person name="Hickenbotham M.T."/>
            <person name="Eldred J."/>
            <person name="Williams D."/>
            <person name="Jones T.A."/>
            <person name="She X."/>
            <person name="Ciccarelli F.D."/>
            <person name="Izaurralde E."/>
            <person name="Taylor J."/>
            <person name="Schmutz J."/>
            <person name="Myers R.M."/>
            <person name="Cox D.R."/>
            <person name="Huang X."/>
            <person name="McPherson J.D."/>
            <person name="Mardis E.R."/>
            <person name="Clifton S.W."/>
            <person name="Warren W.C."/>
            <person name="Chinwalla A.T."/>
            <person name="Eddy S.R."/>
            <person name="Marra M.A."/>
            <person name="Ovcharenko I."/>
            <person name="Furey T.S."/>
            <person name="Miller W."/>
            <person name="Eichler E.E."/>
            <person name="Bork P."/>
            <person name="Suyama M."/>
            <person name="Torrents D."/>
            <person name="Waterston R.H."/>
            <person name="Wilson R.K."/>
        </authorList>
    </citation>
    <scope>NUCLEOTIDE SEQUENCE [LARGE SCALE GENOMIC DNA]</scope>
</reference>
<reference key="4">
    <citation type="submission" date="2005-07" db="EMBL/GenBank/DDBJ databases">
        <authorList>
            <person name="Mural R.J."/>
            <person name="Istrail S."/>
            <person name="Sutton G.G."/>
            <person name="Florea L."/>
            <person name="Halpern A.L."/>
            <person name="Mobarry C.M."/>
            <person name="Lippert R."/>
            <person name="Walenz B."/>
            <person name="Shatkay H."/>
            <person name="Dew I."/>
            <person name="Miller J.R."/>
            <person name="Flanigan M.J."/>
            <person name="Edwards N.J."/>
            <person name="Bolanos R."/>
            <person name="Fasulo D."/>
            <person name="Halldorsson B.V."/>
            <person name="Hannenhalli S."/>
            <person name="Turner R."/>
            <person name="Yooseph S."/>
            <person name="Lu F."/>
            <person name="Nusskern D.R."/>
            <person name="Shue B.C."/>
            <person name="Zheng X.H."/>
            <person name="Zhong F."/>
            <person name="Delcher A.L."/>
            <person name="Huson D.H."/>
            <person name="Kravitz S.A."/>
            <person name="Mouchard L."/>
            <person name="Reinert K."/>
            <person name="Remington K.A."/>
            <person name="Clark A.G."/>
            <person name="Waterman M.S."/>
            <person name="Eichler E.E."/>
            <person name="Adams M.D."/>
            <person name="Hunkapiller M.W."/>
            <person name="Myers E.W."/>
            <person name="Venter J.C."/>
        </authorList>
    </citation>
    <scope>NUCLEOTIDE SEQUENCE [LARGE SCALE GENOMIC DNA]</scope>
</reference>
<reference key="5">
    <citation type="journal article" date="2009" name="Sci. Signal.">
        <title>Quantitative phosphoproteomic analysis of T cell receptor signaling reveals system-wide modulation of protein-protein interactions.</title>
        <authorList>
            <person name="Mayya V."/>
            <person name="Lundgren D.H."/>
            <person name="Hwang S.-I."/>
            <person name="Rezaul K."/>
            <person name="Wu L."/>
            <person name="Eng J.K."/>
            <person name="Rodionov V."/>
            <person name="Han D.K."/>
        </authorList>
    </citation>
    <scope>IDENTIFICATION BY MASS SPECTROMETRY [LARGE SCALE ANALYSIS]</scope>
    <source>
        <tissue>Leukemic T-cell</tissue>
    </source>
</reference>
<reference key="6">
    <citation type="journal article" date="2013" name="J. Proteome Res.">
        <title>Toward a comprehensive characterization of a human cancer cell phosphoproteome.</title>
        <authorList>
            <person name="Zhou H."/>
            <person name="Di Palma S."/>
            <person name="Preisinger C."/>
            <person name="Peng M."/>
            <person name="Polat A.N."/>
            <person name="Heck A.J."/>
            <person name="Mohammed S."/>
        </authorList>
    </citation>
    <scope>PHOSPHORYLATION [LARGE SCALE ANALYSIS] AT THR-393</scope>
    <scope>IDENTIFICATION BY MASS SPECTROMETRY [LARGE SCALE ANALYSIS]</scope>
    <source>
        <tissue>Erythroleukemia</tissue>
    </source>
</reference>
<reference key="7">
    <citation type="journal article" date="2009" name="Cell">
        <title>Large-scale structural analysis of the classical human protein tyrosine phosphatome.</title>
        <authorList>
            <person name="Barr A.J."/>
            <person name="Ugochukwu E."/>
            <person name="Lee W.H."/>
            <person name="King O.N.F."/>
            <person name="Filippakopoulos P."/>
            <person name="Alfano I."/>
            <person name="Savitsky P."/>
            <person name="Burgess-Brown N.A."/>
            <person name="Mueller S."/>
            <person name="Knapp S."/>
        </authorList>
    </citation>
    <scope>X-RAY CRYSTALLOGRAPHY (1.5 ANGSTROMS) OF 6-299</scope>
</reference>
<evidence type="ECO:0000250" key="1"/>
<evidence type="ECO:0000250" key="2">
    <source>
        <dbReference type="UniProtKB" id="Q61152"/>
    </source>
</evidence>
<evidence type="ECO:0000255" key="3">
    <source>
        <dbReference type="PROSITE-ProRule" id="PRU00160"/>
    </source>
</evidence>
<evidence type="ECO:0000255" key="4">
    <source>
        <dbReference type="PROSITE-ProRule" id="PRU10044"/>
    </source>
</evidence>
<evidence type="ECO:0000256" key="5">
    <source>
        <dbReference type="SAM" id="MobiDB-lite"/>
    </source>
</evidence>
<evidence type="ECO:0000269" key="6">
    <source>
    </source>
</evidence>
<evidence type="ECO:0000303" key="7">
    <source>
    </source>
</evidence>
<evidence type="ECO:0000305" key="8"/>
<evidence type="ECO:0007744" key="9">
    <source>
    </source>
</evidence>
<evidence type="ECO:0007829" key="10">
    <source>
        <dbReference type="PDB" id="2OC3"/>
    </source>
</evidence>
<evidence type="ECO:0007829" key="11">
    <source>
        <dbReference type="PDB" id="4GFV"/>
    </source>
</evidence>
<evidence type="ECO:0007829" key="12">
    <source>
        <dbReference type="PDB" id="4NND"/>
    </source>
</evidence>
<protein>
    <recommendedName>
        <fullName>Tyrosine-protein phosphatase non-receptor type 18</fullName>
        <ecNumber>3.1.3.48</ecNumber>
    </recommendedName>
    <alternativeName>
        <fullName>Brain-derived phosphatase</fullName>
    </alternativeName>
</protein>
<gene>
    <name type="primary">PTPN18</name>
    <name type="synonym">BDP1</name>
</gene>
<organism>
    <name type="scientific">Homo sapiens</name>
    <name type="common">Human</name>
    <dbReference type="NCBI Taxonomy" id="9606"/>
    <lineage>
        <taxon>Eukaryota</taxon>
        <taxon>Metazoa</taxon>
        <taxon>Chordata</taxon>
        <taxon>Craniata</taxon>
        <taxon>Vertebrata</taxon>
        <taxon>Euteleostomi</taxon>
        <taxon>Mammalia</taxon>
        <taxon>Eutheria</taxon>
        <taxon>Euarchontoglires</taxon>
        <taxon>Primates</taxon>
        <taxon>Haplorrhini</taxon>
        <taxon>Catarrhini</taxon>
        <taxon>Hominidae</taxon>
        <taxon>Homo</taxon>
    </lineage>
</organism>
<comment type="function">
    <text>Differentially dephosphorylate autophosphorylated tyrosine kinases which are known to be overexpressed in tumor tissues.</text>
</comment>
<comment type="catalytic activity">
    <reaction evidence="4">
        <text>O-phospho-L-tyrosyl-[protein] + H2O = L-tyrosyl-[protein] + phosphate</text>
        <dbReference type="Rhea" id="RHEA:10684"/>
        <dbReference type="Rhea" id="RHEA-COMP:10136"/>
        <dbReference type="Rhea" id="RHEA-COMP:20101"/>
        <dbReference type="ChEBI" id="CHEBI:15377"/>
        <dbReference type="ChEBI" id="CHEBI:43474"/>
        <dbReference type="ChEBI" id="CHEBI:46858"/>
        <dbReference type="ChEBI" id="CHEBI:61978"/>
        <dbReference type="EC" id="3.1.3.48"/>
    </reaction>
</comment>
<comment type="subunit">
    <text evidence="1">Interacts with PSTPIP1.</text>
</comment>
<comment type="interaction">
    <interactant intactId="EBI-1384210">
        <id>Q99952</id>
    </interactant>
    <interactant intactId="EBI-307461">
        <id>Q9Y297</id>
        <label>BTRC</label>
    </interactant>
    <organismsDiffer>false</organismsDiffer>
    <experiments>2</experiments>
</comment>
<comment type="interaction">
    <interactant intactId="EBI-1384210">
        <id>Q99952</id>
    </interactant>
    <interactant intactId="EBI-641062">
        <id>P04626</id>
        <label>ERBB2</label>
    </interactant>
    <organismsDiffer>false</organismsDiffer>
    <experiments>6</experiments>
</comment>
<comment type="interaction">
    <interactant intactId="EBI-1384210">
        <id>Q99952</id>
    </interactant>
    <interactant intactId="EBI-1050964">
        <id>O43586</id>
        <label>PSTPIP1</label>
    </interactant>
    <organismsDiffer>false</organismsDiffer>
    <experiments>5</experiments>
</comment>
<comment type="interaction">
    <interactant intactId="EBI-12739708">
        <id>Q99952-1</id>
    </interactant>
    <interactant intactId="EBI-307461">
        <id>Q9Y297</id>
        <label>BTRC</label>
    </interactant>
    <organismsDiffer>false</organismsDiffer>
    <experiments>2</experiments>
</comment>
<comment type="interaction">
    <interactant intactId="EBI-12739708">
        <id>Q99952-1</id>
    </interactant>
    <interactant intactId="EBI-641062">
        <id>P04626</id>
        <label>ERBB2</label>
    </interactant>
    <organismsDiffer>false</organismsDiffer>
    <experiments>5</experiments>
</comment>
<comment type="subcellular location">
    <subcellularLocation>
        <location evidence="1">Nucleus</location>
    </subcellularLocation>
    <subcellularLocation>
        <location evidence="1">Cytoplasm</location>
    </subcellularLocation>
</comment>
<comment type="alternative products">
    <event type="alternative splicing"/>
    <isoform>
        <id>Q99952-1</id>
        <name>1</name>
        <sequence type="displayed"/>
    </isoform>
    <isoform>
        <id>Q99952-2</id>
        <name>2</name>
        <sequence type="described" ref="VSP_043073"/>
    </isoform>
</comment>
<comment type="tissue specificity">
    <text evidence="6">Expressed in brain, colon and several tumor-derived cell lines.</text>
</comment>
<comment type="similarity">
    <text evidence="8">Belongs to the protein-tyrosine phosphatase family. Non-receptor class 4 subfamily.</text>
</comment>
<feature type="chain" id="PRO_0000094773" description="Tyrosine-protein phosphatase non-receptor type 18">
    <location>
        <begin position="1"/>
        <end position="460"/>
    </location>
</feature>
<feature type="domain" description="Tyrosine-protein phosphatase" evidence="3">
    <location>
        <begin position="26"/>
        <end position="291"/>
    </location>
</feature>
<feature type="region of interest" description="Disordered" evidence="5">
    <location>
        <begin position="361"/>
        <end position="460"/>
    </location>
</feature>
<feature type="compositionally biased region" description="Gly residues" evidence="5">
    <location>
        <begin position="364"/>
        <end position="378"/>
    </location>
</feature>
<feature type="compositionally biased region" description="Basic and acidic residues" evidence="5">
    <location>
        <begin position="449"/>
        <end position="460"/>
    </location>
</feature>
<feature type="active site" description="Phosphocysteine intermediate" evidence="3 4">
    <location>
        <position position="229"/>
    </location>
</feature>
<feature type="binding site" evidence="1">
    <location>
        <position position="197"/>
    </location>
    <ligand>
        <name>substrate</name>
    </ligand>
</feature>
<feature type="binding site" evidence="1">
    <location>
        <begin position="229"/>
        <end position="235"/>
    </location>
    <ligand>
        <name>substrate</name>
    </ligand>
</feature>
<feature type="binding site" evidence="1">
    <location>
        <position position="276"/>
    </location>
    <ligand>
        <name>substrate</name>
    </ligand>
</feature>
<feature type="modified residue" description="Phosphotyrosine" evidence="2">
    <location>
        <position position="389"/>
    </location>
</feature>
<feature type="modified residue" description="Phosphothreonine" evidence="9">
    <location>
        <position position="393"/>
    </location>
</feature>
<feature type="modified residue" description="Phosphotyrosine" evidence="2">
    <location>
        <position position="426"/>
    </location>
</feature>
<feature type="splice variant" id="VSP_043073" description="In isoform 2." evidence="7">
    <location>
        <begin position="32"/>
        <end position="138"/>
    </location>
</feature>
<feature type="sequence variant" id="VAR_047651" description="In dbSNP:rs3739124.">
    <original>M</original>
    <variation>V</variation>
    <location>
        <position position="193"/>
    </location>
</feature>
<feature type="sequence conflict" description="In Ref. 1; CAA56105." evidence="8" ref="1">
    <original>VV</original>
    <variation>EE</variation>
    <location>
        <begin position="356"/>
        <end position="357"/>
    </location>
</feature>
<feature type="sequence conflict" description="In Ref. 1; CAA56105." evidence="8" ref="1">
    <location>
        <begin position="378"/>
        <end position="379"/>
    </location>
</feature>
<feature type="helix" evidence="10">
    <location>
        <begin position="11"/>
        <end position="14"/>
    </location>
</feature>
<feature type="helix" evidence="11">
    <location>
        <begin position="20"/>
        <end position="22"/>
    </location>
</feature>
<feature type="helix" evidence="10">
    <location>
        <begin position="25"/>
        <end position="43"/>
    </location>
</feature>
<feature type="helix" evidence="10">
    <location>
        <begin position="49"/>
        <end position="52"/>
    </location>
</feature>
<feature type="turn" evidence="10">
    <location>
        <begin position="54"/>
        <end position="56"/>
    </location>
</feature>
<feature type="helix" evidence="10">
    <location>
        <begin position="57"/>
        <end position="59"/>
    </location>
</feature>
<feature type="helix" evidence="10">
    <location>
        <begin position="69"/>
        <end position="71"/>
    </location>
</feature>
<feature type="strand" evidence="10">
    <location>
        <begin position="72"/>
        <end position="74"/>
    </location>
</feature>
<feature type="helix" evidence="10">
    <location>
        <begin position="79"/>
        <end position="81"/>
    </location>
</feature>
<feature type="strand" evidence="10">
    <location>
        <begin position="85"/>
        <end position="93"/>
    </location>
</feature>
<feature type="strand" evidence="10">
    <location>
        <begin position="97"/>
        <end position="104"/>
    </location>
</feature>
<feature type="helix" evidence="10">
    <location>
        <begin position="109"/>
        <end position="111"/>
    </location>
</feature>
<feature type="helix" evidence="10">
    <location>
        <begin position="112"/>
        <end position="121"/>
    </location>
</feature>
<feature type="strand" evidence="10">
    <location>
        <begin position="126"/>
        <end position="129"/>
    </location>
</feature>
<feature type="strand" evidence="10">
    <location>
        <begin position="133"/>
        <end position="135"/>
    </location>
</feature>
<feature type="strand" evidence="10">
    <location>
        <begin position="152"/>
        <end position="154"/>
    </location>
</feature>
<feature type="strand" evidence="10">
    <location>
        <begin position="157"/>
        <end position="168"/>
    </location>
</feature>
<feature type="strand" evidence="10">
    <location>
        <begin position="171"/>
        <end position="180"/>
    </location>
</feature>
<feature type="strand" evidence="10">
    <location>
        <begin position="183"/>
        <end position="192"/>
    </location>
</feature>
<feature type="strand" evidence="10">
    <location>
        <begin position="197"/>
        <end position="199"/>
    </location>
</feature>
<feature type="helix" evidence="10">
    <location>
        <begin position="205"/>
        <end position="218"/>
    </location>
</feature>
<feature type="strand" evidence="12">
    <location>
        <begin position="220"/>
        <end position="222"/>
    </location>
</feature>
<feature type="strand" evidence="10">
    <location>
        <begin position="225"/>
        <end position="228"/>
    </location>
</feature>
<feature type="strand" evidence="10">
    <location>
        <begin position="230"/>
        <end position="233"/>
    </location>
</feature>
<feature type="helix" evidence="10">
    <location>
        <begin position="234"/>
        <end position="250"/>
    </location>
</feature>
<feature type="helix" evidence="10">
    <location>
        <begin position="260"/>
        <end position="268"/>
    </location>
</feature>
<feature type="helix" evidence="10">
    <location>
        <begin position="278"/>
        <end position="292"/>
    </location>
</feature>
<name>PTN18_HUMAN</name>
<dbReference type="EC" id="3.1.3.48"/>
<dbReference type="EMBL" id="X79568">
    <property type="protein sequence ID" value="CAA56105.1"/>
    <property type="molecule type" value="mRNA"/>
</dbReference>
<dbReference type="EMBL" id="AK303804">
    <property type="protein sequence ID" value="BAG64758.1"/>
    <property type="molecule type" value="mRNA"/>
</dbReference>
<dbReference type="EMBL" id="AC132479">
    <property type="protein sequence ID" value="AAY24077.1"/>
    <property type="molecule type" value="Genomic_DNA"/>
</dbReference>
<dbReference type="EMBL" id="CH471263">
    <property type="protein sequence ID" value="EAW55618.1"/>
    <property type="molecule type" value="Genomic_DNA"/>
</dbReference>
<dbReference type="EMBL" id="CH471263">
    <property type="protein sequence ID" value="EAW55619.1"/>
    <property type="molecule type" value="Genomic_DNA"/>
</dbReference>
<dbReference type="CCDS" id="CCDS2161.1">
    <molecule id="Q99952-1"/>
</dbReference>
<dbReference type="CCDS" id="CCDS46410.1">
    <molecule id="Q99952-2"/>
</dbReference>
<dbReference type="RefSeq" id="NP_001135842.1">
    <molecule id="Q99952-2"/>
    <property type="nucleotide sequence ID" value="NM_001142370.2"/>
</dbReference>
<dbReference type="RefSeq" id="NP_055184.2">
    <molecule id="Q99952-1"/>
    <property type="nucleotide sequence ID" value="NM_014369.3"/>
</dbReference>
<dbReference type="PDB" id="2OC3">
    <property type="method" value="X-ray"/>
    <property type="resolution" value="1.50 A"/>
    <property type="chains" value="A=6-299"/>
</dbReference>
<dbReference type="PDB" id="4GFU">
    <property type="method" value="X-ray"/>
    <property type="resolution" value="2.00 A"/>
    <property type="chains" value="A=6-300"/>
</dbReference>
<dbReference type="PDB" id="4GFV">
    <property type="method" value="X-ray"/>
    <property type="resolution" value="2.10 A"/>
    <property type="chains" value="A/B=6-300"/>
</dbReference>
<dbReference type="PDB" id="4NND">
    <property type="method" value="X-ray"/>
    <property type="resolution" value="2.50 A"/>
    <property type="chains" value="A/B/D/G=6-295"/>
</dbReference>
<dbReference type="PDBsum" id="2OC3"/>
<dbReference type="PDBsum" id="4GFU"/>
<dbReference type="PDBsum" id="4GFV"/>
<dbReference type="PDBsum" id="4NND"/>
<dbReference type="SMR" id="Q99952"/>
<dbReference type="BioGRID" id="117693">
    <property type="interactions" value="57"/>
</dbReference>
<dbReference type="FunCoup" id="Q99952">
    <property type="interactions" value="2658"/>
</dbReference>
<dbReference type="IntAct" id="Q99952">
    <property type="interactions" value="35"/>
</dbReference>
<dbReference type="MINT" id="Q99952"/>
<dbReference type="STRING" id="9606.ENSP00000175756"/>
<dbReference type="BindingDB" id="Q99952"/>
<dbReference type="ChEMBL" id="CHEMBL3351197"/>
<dbReference type="DEPOD" id="PTPN18"/>
<dbReference type="iPTMnet" id="Q99952"/>
<dbReference type="PhosphoSitePlus" id="Q99952"/>
<dbReference type="BioMuta" id="PTPN18"/>
<dbReference type="DMDM" id="215273871"/>
<dbReference type="jPOST" id="Q99952"/>
<dbReference type="MassIVE" id="Q99952"/>
<dbReference type="PaxDb" id="9606-ENSP00000175756"/>
<dbReference type="PeptideAtlas" id="Q99952"/>
<dbReference type="ProteomicsDB" id="78538">
    <molecule id="Q99952-1"/>
</dbReference>
<dbReference type="ProteomicsDB" id="78539">
    <molecule id="Q99952-2"/>
</dbReference>
<dbReference type="Pumba" id="Q99952"/>
<dbReference type="Antibodypedia" id="33499">
    <property type="antibodies" value="118 antibodies from 24 providers"/>
</dbReference>
<dbReference type="DNASU" id="26469"/>
<dbReference type="Ensembl" id="ENST00000175756.10">
    <molecule id="Q99952-1"/>
    <property type="protein sequence ID" value="ENSP00000175756.5"/>
    <property type="gene ID" value="ENSG00000072135.13"/>
</dbReference>
<dbReference type="Ensembl" id="ENST00000347849.7">
    <molecule id="Q99952-2"/>
    <property type="protein sequence ID" value="ENSP00000310092.5"/>
    <property type="gene ID" value="ENSG00000072135.13"/>
</dbReference>
<dbReference type="GeneID" id="26469"/>
<dbReference type="KEGG" id="hsa:26469"/>
<dbReference type="MANE-Select" id="ENST00000175756.10">
    <property type="protein sequence ID" value="ENSP00000175756.5"/>
    <property type="RefSeq nucleotide sequence ID" value="NM_014369.4"/>
    <property type="RefSeq protein sequence ID" value="NP_055184.2"/>
</dbReference>
<dbReference type="UCSC" id="uc002trb.4">
    <molecule id="Q99952-1"/>
    <property type="organism name" value="human"/>
</dbReference>
<dbReference type="AGR" id="HGNC:9649"/>
<dbReference type="CTD" id="26469"/>
<dbReference type="DisGeNET" id="26469"/>
<dbReference type="GeneCards" id="PTPN18"/>
<dbReference type="HGNC" id="HGNC:9649">
    <property type="gene designation" value="PTPN18"/>
</dbReference>
<dbReference type="HPA" id="ENSG00000072135">
    <property type="expression patterns" value="Low tissue specificity"/>
</dbReference>
<dbReference type="MIM" id="606587">
    <property type="type" value="gene"/>
</dbReference>
<dbReference type="neXtProt" id="NX_Q99952"/>
<dbReference type="OpenTargets" id="ENSG00000072135"/>
<dbReference type="PharmGKB" id="PA33991"/>
<dbReference type="VEuPathDB" id="HostDB:ENSG00000072135"/>
<dbReference type="eggNOG" id="KOG0789">
    <property type="taxonomic scope" value="Eukaryota"/>
</dbReference>
<dbReference type="GeneTree" id="ENSGT00940000162860"/>
<dbReference type="HOGENOM" id="CLU_015557_0_0_1"/>
<dbReference type="InParanoid" id="Q99952"/>
<dbReference type="OMA" id="NMGDTYA"/>
<dbReference type="OrthoDB" id="8609993at2759"/>
<dbReference type="PAN-GO" id="Q99952">
    <property type="GO annotations" value="4 GO annotations based on evolutionary models"/>
</dbReference>
<dbReference type="PhylomeDB" id="Q99952"/>
<dbReference type="TreeFam" id="TF351977"/>
<dbReference type="BRENDA" id="3.1.3.48">
    <property type="organism ID" value="2681"/>
</dbReference>
<dbReference type="PathwayCommons" id="Q99952"/>
<dbReference type="Reactome" id="R-HSA-8863795">
    <property type="pathway name" value="Downregulation of ERBB2 signaling"/>
</dbReference>
<dbReference type="Reactome" id="R-HSA-9008059">
    <property type="pathway name" value="Interleukin-37 signaling"/>
</dbReference>
<dbReference type="SignaLink" id="Q99952"/>
<dbReference type="SIGNOR" id="Q99952"/>
<dbReference type="BioGRID-ORCS" id="26469">
    <property type="hits" value="11 hits in 1172 CRISPR screens"/>
</dbReference>
<dbReference type="ChiTaRS" id="PTPN18">
    <property type="organism name" value="human"/>
</dbReference>
<dbReference type="EvolutionaryTrace" id="Q99952"/>
<dbReference type="GeneWiki" id="PTPN18"/>
<dbReference type="GenomeRNAi" id="26469"/>
<dbReference type="Pharos" id="Q99952">
    <property type="development level" value="Tbio"/>
</dbReference>
<dbReference type="PRO" id="PR:Q99952"/>
<dbReference type="Proteomes" id="UP000005640">
    <property type="component" value="Chromosome 2"/>
</dbReference>
<dbReference type="RNAct" id="Q99952">
    <property type="molecule type" value="protein"/>
</dbReference>
<dbReference type="Bgee" id="ENSG00000072135">
    <property type="expression patterns" value="Expressed in granulocyte and 194 other cell types or tissues"/>
</dbReference>
<dbReference type="ExpressionAtlas" id="Q99952">
    <property type="expression patterns" value="baseline and differential"/>
</dbReference>
<dbReference type="GO" id="GO:0005737">
    <property type="term" value="C:cytoplasm"/>
    <property type="evidence" value="ECO:0000318"/>
    <property type="project" value="GO_Central"/>
</dbReference>
<dbReference type="GO" id="GO:0005829">
    <property type="term" value="C:cytosol"/>
    <property type="evidence" value="ECO:0000304"/>
    <property type="project" value="Reactome"/>
</dbReference>
<dbReference type="GO" id="GO:0005654">
    <property type="term" value="C:nucleoplasm"/>
    <property type="evidence" value="ECO:0000304"/>
    <property type="project" value="Reactome"/>
</dbReference>
<dbReference type="GO" id="GO:0005634">
    <property type="term" value="C:nucleus"/>
    <property type="evidence" value="ECO:0000318"/>
    <property type="project" value="GO_Central"/>
</dbReference>
<dbReference type="GO" id="GO:0004726">
    <property type="term" value="F:non-membrane spanning protein tyrosine phosphatase activity"/>
    <property type="evidence" value="ECO:0000304"/>
    <property type="project" value="ProtInc"/>
</dbReference>
<dbReference type="GO" id="GO:0004725">
    <property type="term" value="F:protein tyrosine phosphatase activity"/>
    <property type="evidence" value="ECO:0000269"/>
    <property type="project" value="Reactome"/>
</dbReference>
<dbReference type="GO" id="GO:0001825">
    <property type="term" value="P:blastocyst formation"/>
    <property type="evidence" value="ECO:0007669"/>
    <property type="project" value="Ensembl"/>
</dbReference>
<dbReference type="GO" id="GO:1901185">
    <property type="term" value="P:negative regulation of ERBB signaling pathway"/>
    <property type="evidence" value="ECO:0000304"/>
    <property type="project" value="Reactome"/>
</dbReference>
<dbReference type="GO" id="GO:0006470">
    <property type="term" value="P:protein dephosphorylation"/>
    <property type="evidence" value="ECO:0000304"/>
    <property type="project" value="ProtInc"/>
</dbReference>
<dbReference type="CDD" id="cd14603">
    <property type="entry name" value="PTPc-N18"/>
    <property type="match status" value="1"/>
</dbReference>
<dbReference type="FunFam" id="3.90.190.10:FF:000045">
    <property type="entry name" value="Tyrosine-protein phosphatase non-receptor type 12"/>
    <property type="match status" value="1"/>
</dbReference>
<dbReference type="Gene3D" id="3.90.190.10">
    <property type="entry name" value="Protein tyrosine phosphatase superfamily"/>
    <property type="match status" value="1"/>
</dbReference>
<dbReference type="IDEAL" id="IID00581"/>
<dbReference type="InterPro" id="IPR029021">
    <property type="entry name" value="Prot-tyrosine_phosphatase-like"/>
</dbReference>
<dbReference type="InterPro" id="IPR047170">
    <property type="entry name" value="PTN12/18/22"/>
</dbReference>
<dbReference type="InterPro" id="IPR047254">
    <property type="entry name" value="PTN18_cat"/>
</dbReference>
<dbReference type="InterPro" id="IPR000242">
    <property type="entry name" value="PTP_cat"/>
</dbReference>
<dbReference type="InterPro" id="IPR016130">
    <property type="entry name" value="Tyr_Pase_AS"/>
</dbReference>
<dbReference type="InterPro" id="IPR003595">
    <property type="entry name" value="Tyr_Pase_cat"/>
</dbReference>
<dbReference type="InterPro" id="IPR000387">
    <property type="entry name" value="Tyr_Pase_dom"/>
</dbReference>
<dbReference type="PANTHER" id="PTHR45983">
    <property type="entry name" value="TYROSINE PHOSPHATSE N18, PUTATIVE-RELATED"/>
    <property type="match status" value="1"/>
</dbReference>
<dbReference type="PANTHER" id="PTHR45983:SF4">
    <property type="entry name" value="TYROSINE-PROTEIN PHOSPHATASE NON-RECEPTOR TYPE 18"/>
    <property type="match status" value="1"/>
</dbReference>
<dbReference type="Pfam" id="PF00102">
    <property type="entry name" value="Y_phosphatase"/>
    <property type="match status" value="1"/>
</dbReference>
<dbReference type="PRINTS" id="PR00700">
    <property type="entry name" value="PRTYPHPHTASE"/>
</dbReference>
<dbReference type="SMART" id="SM00194">
    <property type="entry name" value="PTPc"/>
    <property type="match status" value="1"/>
</dbReference>
<dbReference type="SMART" id="SM00404">
    <property type="entry name" value="PTPc_motif"/>
    <property type="match status" value="1"/>
</dbReference>
<dbReference type="SUPFAM" id="SSF52799">
    <property type="entry name" value="(Phosphotyrosine protein) phosphatases II"/>
    <property type="match status" value="1"/>
</dbReference>
<dbReference type="PROSITE" id="PS00383">
    <property type="entry name" value="TYR_PHOSPHATASE_1"/>
    <property type="match status" value="1"/>
</dbReference>
<dbReference type="PROSITE" id="PS50056">
    <property type="entry name" value="TYR_PHOSPHATASE_2"/>
    <property type="match status" value="1"/>
</dbReference>
<dbReference type="PROSITE" id="PS50055">
    <property type="entry name" value="TYR_PHOSPHATASE_PTP"/>
    <property type="match status" value="1"/>
</dbReference>
<accession>Q99952</accession>
<accession>B4E1E6</accession>
<accession>Q53P42</accession>
<sequence length="460" mass="50482">MSRSLDSARSFLERLEARGGREGAVLAGEFSDIQACSAAWKADGVCSTVAGSRPENVRKNRYKDVLPYDQTRVILSLLQEEGHSDYINGNFIRGVDGSLAYIATQGPLPHTLLDFWRLVWEFGVKVILMACREIENGRKRCERYWAQEQEPLQTGLFCITLIKEKWLNEDIMLRTLKVTFQKESRSVYQLQYMSWPDRGVPSSPDHMLAMVEEARRLQGSGPEPLCVHCSAGCGRTGVLCTVDYVRQLLLTQMIPPDFSLFDVVLKMRKQRPAAVQTEEQYRFLYHTVAQMFCSTLQNASPHYQNIKENCAPLYDDALFLRTPQALLAIPRPPGGVLRSISVPGSPGHAMADTYAVVQKRGAPAGAGSGTQTGTGTGTGARSAEEAPLYSKVTPRAQRPGAHAEDARGTLPGRVPADQSPAGSGAYEDVAGGAQTGGLGFNLRIGRPKGPRDPPAEWTRV</sequence>